<accession>B1JIQ4</accession>
<comment type="function">
    <text evidence="1">Catalyzes the conversion of 3-deoxy-D-arabino-heptulosonate 7-phosphate (DAHP) to dehydroquinate (DHQ).</text>
</comment>
<comment type="catalytic activity">
    <reaction evidence="1">
        <text>7-phospho-2-dehydro-3-deoxy-D-arabino-heptonate = 3-dehydroquinate + phosphate</text>
        <dbReference type="Rhea" id="RHEA:21968"/>
        <dbReference type="ChEBI" id="CHEBI:32364"/>
        <dbReference type="ChEBI" id="CHEBI:43474"/>
        <dbReference type="ChEBI" id="CHEBI:58394"/>
        <dbReference type="EC" id="4.2.3.4"/>
    </reaction>
</comment>
<comment type="cofactor">
    <cofactor evidence="1">
        <name>Co(2+)</name>
        <dbReference type="ChEBI" id="CHEBI:48828"/>
    </cofactor>
    <cofactor evidence="1">
        <name>Zn(2+)</name>
        <dbReference type="ChEBI" id="CHEBI:29105"/>
    </cofactor>
    <text evidence="1">Binds 1 divalent metal cation per subunit. Can use either Co(2+) or Zn(2+).</text>
</comment>
<comment type="cofactor">
    <cofactor evidence="1">
        <name>NAD(+)</name>
        <dbReference type="ChEBI" id="CHEBI:57540"/>
    </cofactor>
</comment>
<comment type="pathway">
    <text evidence="1">Metabolic intermediate biosynthesis; chorismate biosynthesis; chorismate from D-erythrose 4-phosphate and phosphoenolpyruvate: step 2/7.</text>
</comment>
<comment type="subcellular location">
    <subcellularLocation>
        <location evidence="1">Cytoplasm</location>
    </subcellularLocation>
</comment>
<comment type="similarity">
    <text evidence="1">Belongs to the sugar phosphate cyclases superfamily. Dehydroquinate synthase family.</text>
</comment>
<dbReference type="EC" id="4.2.3.4" evidence="1"/>
<dbReference type="EMBL" id="CP000950">
    <property type="protein sequence ID" value="ACA66539.1"/>
    <property type="molecule type" value="Genomic_DNA"/>
</dbReference>
<dbReference type="RefSeq" id="WP_002208898.1">
    <property type="nucleotide sequence ID" value="NZ_CP009792.1"/>
</dbReference>
<dbReference type="SMR" id="B1JIQ4"/>
<dbReference type="GeneID" id="57974449"/>
<dbReference type="KEGG" id="ypy:YPK_0226"/>
<dbReference type="PATRIC" id="fig|502800.11.peg.832"/>
<dbReference type="UniPathway" id="UPA00053">
    <property type="reaction ID" value="UER00085"/>
</dbReference>
<dbReference type="GO" id="GO:0005737">
    <property type="term" value="C:cytoplasm"/>
    <property type="evidence" value="ECO:0007669"/>
    <property type="project" value="UniProtKB-SubCell"/>
</dbReference>
<dbReference type="GO" id="GO:0003856">
    <property type="term" value="F:3-dehydroquinate synthase activity"/>
    <property type="evidence" value="ECO:0007669"/>
    <property type="project" value="UniProtKB-UniRule"/>
</dbReference>
<dbReference type="GO" id="GO:0046872">
    <property type="term" value="F:metal ion binding"/>
    <property type="evidence" value="ECO:0007669"/>
    <property type="project" value="UniProtKB-KW"/>
</dbReference>
<dbReference type="GO" id="GO:0000166">
    <property type="term" value="F:nucleotide binding"/>
    <property type="evidence" value="ECO:0007669"/>
    <property type="project" value="UniProtKB-KW"/>
</dbReference>
<dbReference type="GO" id="GO:0008652">
    <property type="term" value="P:amino acid biosynthetic process"/>
    <property type="evidence" value="ECO:0007669"/>
    <property type="project" value="UniProtKB-KW"/>
</dbReference>
<dbReference type="GO" id="GO:0009073">
    <property type="term" value="P:aromatic amino acid family biosynthetic process"/>
    <property type="evidence" value="ECO:0007669"/>
    <property type="project" value="UniProtKB-KW"/>
</dbReference>
<dbReference type="GO" id="GO:0009423">
    <property type="term" value="P:chorismate biosynthetic process"/>
    <property type="evidence" value="ECO:0007669"/>
    <property type="project" value="UniProtKB-UniRule"/>
</dbReference>
<dbReference type="CDD" id="cd08195">
    <property type="entry name" value="DHQS"/>
    <property type="match status" value="1"/>
</dbReference>
<dbReference type="FunFam" id="1.20.1090.10:FF:000002">
    <property type="entry name" value="3-dehydroquinate synthase"/>
    <property type="match status" value="1"/>
</dbReference>
<dbReference type="FunFam" id="3.40.50.1970:FF:000001">
    <property type="entry name" value="3-dehydroquinate synthase"/>
    <property type="match status" value="1"/>
</dbReference>
<dbReference type="Gene3D" id="3.40.50.1970">
    <property type="match status" value="1"/>
</dbReference>
<dbReference type="Gene3D" id="1.20.1090.10">
    <property type="entry name" value="Dehydroquinate synthase-like - alpha domain"/>
    <property type="match status" value="1"/>
</dbReference>
<dbReference type="HAMAP" id="MF_00110">
    <property type="entry name" value="DHQ_synthase"/>
    <property type="match status" value="1"/>
</dbReference>
<dbReference type="InterPro" id="IPR050071">
    <property type="entry name" value="Dehydroquinate_synthase"/>
</dbReference>
<dbReference type="InterPro" id="IPR016037">
    <property type="entry name" value="DHQ_synth_AroB"/>
</dbReference>
<dbReference type="InterPro" id="IPR030963">
    <property type="entry name" value="DHQ_synth_fam"/>
</dbReference>
<dbReference type="InterPro" id="IPR030960">
    <property type="entry name" value="DHQS/DOIS_N"/>
</dbReference>
<dbReference type="InterPro" id="IPR056179">
    <property type="entry name" value="DHQS_C"/>
</dbReference>
<dbReference type="NCBIfam" id="TIGR01357">
    <property type="entry name" value="aroB"/>
    <property type="match status" value="1"/>
</dbReference>
<dbReference type="PANTHER" id="PTHR43622">
    <property type="entry name" value="3-DEHYDROQUINATE SYNTHASE"/>
    <property type="match status" value="1"/>
</dbReference>
<dbReference type="PANTHER" id="PTHR43622:SF7">
    <property type="entry name" value="3-DEHYDROQUINATE SYNTHASE, CHLOROPLASTIC"/>
    <property type="match status" value="1"/>
</dbReference>
<dbReference type="Pfam" id="PF01761">
    <property type="entry name" value="DHQ_synthase"/>
    <property type="match status" value="1"/>
</dbReference>
<dbReference type="Pfam" id="PF24621">
    <property type="entry name" value="DHQS_C"/>
    <property type="match status" value="1"/>
</dbReference>
<dbReference type="PIRSF" id="PIRSF001455">
    <property type="entry name" value="DHQ_synth"/>
    <property type="match status" value="1"/>
</dbReference>
<dbReference type="SUPFAM" id="SSF56796">
    <property type="entry name" value="Dehydroquinate synthase-like"/>
    <property type="match status" value="1"/>
</dbReference>
<feature type="chain" id="PRO_1000094664" description="3-dehydroquinate synthase">
    <location>
        <begin position="1"/>
        <end position="362"/>
    </location>
</feature>
<feature type="binding site" evidence="1">
    <location>
        <begin position="71"/>
        <end position="76"/>
    </location>
    <ligand>
        <name>NAD(+)</name>
        <dbReference type="ChEBI" id="CHEBI:57540"/>
    </ligand>
</feature>
<feature type="binding site" evidence="1">
    <location>
        <begin position="105"/>
        <end position="109"/>
    </location>
    <ligand>
        <name>NAD(+)</name>
        <dbReference type="ChEBI" id="CHEBI:57540"/>
    </ligand>
</feature>
<feature type="binding site" evidence="1">
    <location>
        <begin position="129"/>
        <end position="130"/>
    </location>
    <ligand>
        <name>NAD(+)</name>
        <dbReference type="ChEBI" id="CHEBI:57540"/>
    </ligand>
</feature>
<feature type="binding site" evidence="1">
    <location>
        <position position="142"/>
    </location>
    <ligand>
        <name>NAD(+)</name>
        <dbReference type="ChEBI" id="CHEBI:57540"/>
    </ligand>
</feature>
<feature type="binding site" evidence="1">
    <location>
        <position position="151"/>
    </location>
    <ligand>
        <name>NAD(+)</name>
        <dbReference type="ChEBI" id="CHEBI:57540"/>
    </ligand>
</feature>
<feature type="binding site" evidence="1">
    <location>
        <begin position="169"/>
        <end position="172"/>
    </location>
    <ligand>
        <name>NAD(+)</name>
        <dbReference type="ChEBI" id="CHEBI:57540"/>
    </ligand>
</feature>
<feature type="binding site" evidence="1">
    <location>
        <position position="184"/>
    </location>
    <ligand>
        <name>Zn(2+)</name>
        <dbReference type="ChEBI" id="CHEBI:29105"/>
    </ligand>
</feature>
<feature type="binding site" evidence="1">
    <location>
        <position position="248"/>
    </location>
    <ligand>
        <name>Zn(2+)</name>
        <dbReference type="ChEBI" id="CHEBI:29105"/>
    </ligand>
</feature>
<feature type="binding site" evidence="1">
    <location>
        <position position="265"/>
    </location>
    <ligand>
        <name>Zn(2+)</name>
        <dbReference type="ChEBI" id="CHEBI:29105"/>
    </ligand>
</feature>
<reference key="1">
    <citation type="submission" date="2008-02" db="EMBL/GenBank/DDBJ databases">
        <title>Complete sequence of Yersinia pseudotuberculosis YPIII.</title>
        <authorList>
            <consortium name="US DOE Joint Genome Institute"/>
            <person name="Copeland A."/>
            <person name="Lucas S."/>
            <person name="Lapidus A."/>
            <person name="Glavina del Rio T."/>
            <person name="Dalin E."/>
            <person name="Tice H."/>
            <person name="Bruce D."/>
            <person name="Goodwin L."/>
            <person name="Pitluck S."/>
            <person name="Munk A.C."/>
            <person name="Brettin T."/>
            <person name="Detter J.C."/>
            <person name="Han C."/>
            <person name="Tapia R."/>
            <person name="Schmutz J."/>
            <person name="Larimer F."/>
            <person name="Land M."/>
            <person name="Hauser L."/>
            <person name="Challacombe J.F."/>
            <person name="Green L."/>
            <person name="Lindler L.E."/>
            <person name="Nikolich M.P."/>
            <person name="Richardson P."/>
        </authorList>
    </citation>
    <scope>NUCLEOTIDE SEQUENCE [LARGE SCALE GENOMIC DNA]</scope>
    <source>
        <strain>YPIII</strain>
    </source>
</reference>
<name>AROB_YERPY</name>
<gene>
    <name evidence="1" type="primary">aroB</name>
    <name type="ordered locus">YPK_0226</name>
</gene>
<keyword id="KW-0028">Amino-acid biosynthesis</keyword>
<keyword id="KW-0057">Aromatic amino acid biosynthesis</keyword>
<keyword id="KW-0170">Cobalt</keyword>
<keyword id="KW-0963">Cytoplasm</keyword>
<keyword id="KW-0456">Lyase</keyword>
<keyword id="KW-0479">Metal-binding</keyword>
<keyword id="KW-0520">NAD</keyword>
<keyword id="KW-0547">Nucleotide-binding</keyword>
<keyword id="KW-0862">Zinc</keyword>
<evidence type="ECO:0000255" key="1">
    <source>
        <dbReference type="HAMAP-Rule" id="MF_00110"/>
    </source>
</evidence>
<organism>
    <name type="scientific">Yersinia pseudotuberculosis serotype O:3 (strain YPIII)</name>
    <dbReference type="NCBI Taxonomy" id="502800"/>
    <lineage>
        <taxon>Bacteria</taxon>
        <taxon>Pseudomonadati</taxon>
        <taxon>Pseudomonadota</taxon>
        <taxon>Gammaproteobacteria</taxon>
        <taxon>Enterobacterales</taxon>
        <taxon>Yersiniaceae</taxon>
        <taxon>Yersinia</taxon>
    </lineage>
</organism>
<sequence>MEKITVTLGERSYPITIAAGLFNDPASFKPLKAGDQVMLVTNQTLAPLYLDSLRAVLEHGGIKVDQVILPDGEQYKSLSVMEQVFSALLEKPHGRDTTLVALGGGVVGDLTGFAAACYQRGVRFIQVPTTLLSQVDSSVGGKTAVNHPLGKNMIGAFYQPASVVVDLNCLKTLPPRELASGLAEVIKYGIILDAAFFDWLENNIDALLALDMSALAYCIRRCCELKADVVAADEREESGARALLNLGHTYGHAIEAEMGYGVWLHGEAVAAGMVMAAQTSRRLGQLSVSDVERIKKLLLRAGLPVCGPKEMAPESYLPHMMRDKKVLAGELRLVLPTAIGKSEIRGGVAHDMVLASIADCRP</sequence>
<proteinExistence type="inferred from homology"/>
<protein>
    <recommendedName>
        <fullName evidence="1">3-dehydroquinate synthase</fullName>
        <shortName evidence="1">DHQS</shortName>
        <ecNumber evidence="1">4.2.3.4</ecNumber>
    </recommendedName>
</protein>